<feature type="chain" id="PRO_0000390514" description="Pseudouridine-5'-phosphate glycosidase">
    <location>
        <begin position="1"/>
        <end position="313"/>
    </location>
</feature>
<feature type="active site" description="Proton donor" evidence="1">
    <location>
        <position position="26"/>
    </location>
</feature>
<feature type="active site" description="Nucleophile" evidence="1">
    <location>
        <position position="160"/>
    </location>
</feature>
<feature type="binding site" evidence="1">
    <location>
        <position position="87"/>
    </location>
    <ligand>
        <name>substrate</name>
    </ligand>
</feature>
<feature type="binding site" evidence="1">
    <location>
        <position position="107"/>
    </location>
    <ligand>
        <name>substrate</name>
    </ligand>
</feature>
<feature type="binding site" evidence="1">
    <location>
        <position position="139"/>
    </location>
    <ligand>
        <name>Mn(2+)</name>
        <dbReference type="ChEBI" id="CHEBI:29035"/>
    </ligand>
</feature>
<feature type="binding site" evidence="1">
    <location>
        <begin position="141"/>
        <end position="143"/>
    </location>
    <ligand>
        <name>substrate</name>
    </ligand>
</feature>
<proteinExistence type="inferred from homology"/>
<sequence>MHNVPIEYSDEVQNALSNGLPILGLESNVLSHGLPYPRNLEMFNACDEIIRSNGVVPALTFIRDKRICIGASPKDVELLTDDPKPIKVSARDIALCIAQGKVGATTASASIAICELAGIRIFSTAGLGGVHRDFSETLDVSADLHEISSRKTIVVSAGVKKFLDIPKTSEVLESLGVPVVGFGTSEFPAFYCRKSGAFLESFSQDPIEIATAAATHIETVGPGGFLILVAPSKEIALDDELVEKAVQRSLINASSQGVRGKAITKFVMRAIDSETDNRSQTANFDVMVEVVNAAAQIARSLKPEFFLDSVAKK</sequence>
<geneLocation type="plasmid">
    <name>pET44827</name>
</geneLocation>
<accession>B3GW58</accession>
<name>PSUG_CORA7</name>
<organism>
    <name type="scientific">Corynebacterium aurimucosum (strain ATCC 700975 / DSM 44827 / CIP 107346 / CN-1)</name>
    <name type="common">Corynebacterium nigricans</name>
    <dbReference type="NCBI Taxonomy" id="548476"/>
    <lineage>
        <taxon>Bacteria</taxon>
        <taxon>Bacillati</taxon>
        <taxon>Actinomycetota</taxon>
        <taxon>Actinomycetes</taxon>
        <taxon>Mycobacteriales</taxon>
        <taxon>Corynebacteriaceae</taxon>
        <taxon>Corynebacterium</taxon>
    </lineage>
</organism>
<reference key="1">
    <citation type="journal article" date="2010" name="BMC Genomics">
        <title>Complete genome sequence and lifestyle of black-pigmented Corynebacterium aurimucosum ATCC 700975 (formerly C. nigricans CN-1) isolated from a vaginal swab of a woman with spontaneous abortion.</title>
        <authorList>
            <person name="Trost E."/>
            <person name="Gotker S."/>
            <person name="Schneider J."/>
            <person name="Schneiker-Bekel S."/>
            <person name="Szczepanowski R."/>
            <person name="Tilker A."/>
            <person name="Viehoever P."/>
            <person name="Arnold W."/>
            <person name="Bekel T."/>
            <person name="Blom J."/>
            <person name="Gartemann K.H."/>
            <person name="Linke B."/>
            <person name="Goesmann A."/>
            <person name="Puhler A."/>
            <person name="Shukla S.K."/>
            <person name="Tauch A."/>
        </authorList>
    </citation>
    <scope>NUCLEOTIDE SEQUENCE [LARGE SCALE GENOMIC DNA]</scope>
    <source>
        <strain>ATCC 700975 / DSM 44827 / CIP 107346 / CN-1</strain>
    </source>
</reference>
<dbReference type="EC" id="4.2.1.70" evidence="1"/>
<dbReference type="EMBL" id="FM164414">
    <property type="protein sequence ID" value="CAQ58241.1"/>
    <property type="molecule type" value="Genomic_DNA"/>
</dbReference>
<dbReference type="RefSeq" id="WP_012468093.1">
    <property type="nucleotide sequence ID" value="NC_010813.1"/>
</dbReference>
<dbReference type="SMR" id="B3GW58"/>
<dbReference type="GeneID" id="31922617"/>
<dbReference type="KEGG" id="car:CAQ58241.1"/>
<dbReference type="eggNOG" id="COG2313">
    <property type="taxonomic scope" value="Bacteria"/>
</dbReference>
<dbReference type="HOGENOM" id="CLU_012201_0_1_11"/>
<dbReference type="OrthoDB" id="9805870at2"/>
<dbReference type="Proteomes" id="UP000002077">
    <property type="component" value="Plasmid pET44827"/>
</dbReference>
<dbReference type="GO" id="GO:0005737">
    <property type="term" value="C:cytoplasm"/>
    <property type="evidence" value="ECO:0007669"/>
    <property type="project" value="TreeGrafter"/>
</dbReference>
<dbReference type="GO" id="GO:0016798">
    <property type="term" value="F:hydrolase activity, acting on glycosyl bonds"/>
    <property type="evidence" value="ECO:0007669"/>
    <property type="project" value="UniProtKB-KW"/>
</dbReference>
<dbReference type="GO" id="GO:0046872">
    <property type="term" value="F:metal ion binding"/>
    <property type="evidence" value="ECO:0007669"/>
    <property type="project" value="UniProtKB-KW"/>
</dbReference>
<dbReference type="GO" id="GO:0004730">
    <property type="term" value="F:pseudouridylate synthase activity"/>
    <property type="evidence" value="ECO:0007669"/>
    <property type="project" value="UniProtKB-UniRule"/>
</dbReference>
<dbReference type="GO" id="GO:0046113">
    <property type="term" value="P:nucleobase catabolic process"/>
    <property type="evidence" value="ECO:0007669"/>
    <property type="project" value="UniProtKB-UniRule"/>
</dbReference>
<dbReference type="Gene3D" id="3.40.1790.10">
    <property type="entry name" value="Indigoidine synthase domain"/>
    <property type="match status" value="1"/>
</dbReference>
<dbReference type="HAMAP" id="MF_01876">
    <property type="entry name" value="PsiMP_glycosidase"/>
    <property type="match status" value="1"/>
</dbReference>
<dbReference type="InterPro" id="IPR022830">
    <property type="entry name" value="Indigdn_synthA-like"/>
</dbReference>
<dbReference type="InterPro" id="IPR007342">
    <property type="entry name" value="PsuG"/>
</dbReference>
<dbReference type="PANTHER" id="PTHR42909:SF1">
    <property type="entry name" value="CARBOHYDRATE KINASE PFKB DOMAIN-CONTAINING PROTEIN"/>
    <property type="match status" value="1"/>
</dbReference>
<dbReference type="PANTHER" id="PTHR42909">
    <property type="entry name" value="ZGC:136858"/>
    <property type="match status" value="1"/>
</dbReference>
<dbReference type="Pfam" id="PF04227">
    <property type="entry name" value="Indigoidine_A"/>
    <property type="match status" value="1"/>
</dbReference>
<dbReference type="SUPFAM" id="SSF110581">
    <property type="entry name" value="Indigoidine synthase A-like"/>
    <property type="match status" value="1"/>
</dbReference>
<gene>
    <name evidence="1" type="primary">psuG</name>
</gene>
<protein>
    <recommendedName>
        <fullName evidence="1">Pseudouridine-5'-phosphate glycosidase</fullName>
        <shortName evidence="1">PsiMP glycosidase</shortName>
        <ecNumber evidence="1">4.2.1.70</ecNumber>
    </recommendedName>
</protein>
<keyword id="KW-0326">Glycosidase</keyword>
<keyword id="KW-0378">Hydrolase</keyword>
<keyword id="KW-0456">Lyase</keyword>
<keyword id="KW-0464">Manganese</keyword>
<keyword id="KW-0479">Metal-binding</keyword>
<keyword id="KW-0614">Plasmid</keyword>
<keyword id="KW-1185">Reference proteome</keyword>
<evidence type="ECO:0000255" key="1">
    <source>
        <dbReference type="HAMAP-Rule" id="MF_01876"/>
    </source>
</evidence>
<comment type="function">
    <text evidence="1">Catalyzes the reversible cleavage of pseudouridine 5'-phosphate (PsiMP) to ribose 5-phosphate and uracil. Functions biologically in the cleavage direction, as part of a pseudouridine degradation pathway.</text>
</comment>
<comment type="catalytic activity">
    <reaction evidence="1">
        <text>D-ribose 5-phosphate + uracil = psi-UMP + H2O</text>
        <dbReference type="Rhea" id="RHEA:18337"/>
        <dbReference type="ChEBI" id="CHEBI:15377"/>
        <dbReference type="ChEBI" id="CHEBI:17568"/>
        <dbReference type="ChEBI" id="CHEBI:58380"/>
        <dbReference type="ChEBI" id="CHEBI:78346"/>
        <dbReference type="EC" id="4.2.1.70"/>
    </reaction>
</comment>
<comment type="cofactor">
    <cofactor evidence="1">
        <name>Mn(2+)</name>
        <dbReference type="ChEBI" id="CHEBI:29035"/>
    </cofactor>
    <text evidence="1">Binds 1 Mn(2+) ion per subunit.</text>
</comment>
<comment type="subunit">
    <text evidence="1">Homotrimer.</text>
</comment>
<comment type="similarity">
    <text evidence="1">Belongs to the pseudouridine-5'-phosphate glycosidase family.</text>
</comment>